<accession>Q8HXP8</accession>
<proteinExistence type="evidence at transcript level"/>
<reference key="1">
    <citation type="journal article" date="2002" name="Gene">
        <title>Structure, molecular evolution, and gene expression of primate superoxide dismutases.</title>
        <authorList>
            <person name="Fukuhara R."/>
            <person name="Tezuka T."/>
            <person name="Kageyama T."/>
        </authorList>
    </citation>
    <scope>NUCLEOTIDE SEQUENCE [MRNA]</scope>
</reference>
<keyword id="KW-0007">Acetylation</keyword>
<keyword id="KW-0049">Antioxidant</keyword>
<keyword id="KW-0186">Copper</keyword>
<keyword id="KW-0963">Cytoplasm</keyword>
<keyword id="KW-1015">Disulfide bond</keyword>
<keyword id="KW-0449">Lipoprotein</keyword>
<keyword id="KW-0479">Metal-binding</keyword>
<keyword id="KW-0539">Nucleus</keyword>
<keyword id="KW-0560">Oxidoreductase</keyword>
<keyword id="KW-0564">Palmitate</keyword>
<keyword id="KW-0597">Phosphoprotein</keyword>
<keyword id="KW-1185">Reference proteome</keyword>
<keyword id="KW-0862">Zinc</keyword>
<dbReference type="EC" id="1.15.1.1" evidence="2"/>
<dbReference type="EMBL" id="AB087273">
    <property type="protein sequence ID" value="BAC20352.1"/>
    <property type="molecule type" value="mRNA"/>
</dbReference>
<dbReference type="SMR" id="Q8HXP8"/>
<dbReference type="FunCoup" id="Q8HXP8">
    <property type="interactions" value="1564"/>
</dbReference>
<dbReference type="STRING" id="9483.ENSCJAP00000016448"/>
<dbReference type="eggNOG" id="KOG0441">
    <property type="taxonomic scope" value="Eukaryota"/>
</dbReference>
<dbReference type="InParanoid" id="Q8HXP8"/>
<dbReference type="Proteomes" id="UP000008225">
    <property type="component" value="Unplaced"/>
</dbReference>
<dbReference type="GO" id="GO:0005737">
    <property type="term" value="C:cytoplasm"/>
    <property type="evidence" value="ECO:0000250"/>
    <property type="project" value="UniProtKB"/>
</dbReference>
<dbReference type="GO" id="GO:0031410">
    <property type="term" value="C:cytoplasmic vesicle"/>
    <property type="evidence" value="ECO:0000250"/>
    <property type="project" value="UniProtKB"/>
</dbReference>
<dbReference type="GO" id="GO:0005829">
    <property type="term" value="C:cytosol"/>
    <property type="evidence" value="ECO:0000250"/>
    <property type="project" value="UniProtKB"/>
</dbReference>
<dbReference type="GO" id="GO:0032839">
    <property type="term" value="C:dendrite cytoplasm"/>
    <property type="evidence" value="ECO:0000250"/>
    <property type="project" value="UniProtKB"/>
</dbReference>
<dbReference type="GO" id="GO:0005739">
    <property type="term" value="C:mitochondrion"/>
    <property type="evidence" value="ECO:0000250"/>
    <property type="project" value="UniProtKB"/>
</dbReference>
<dbReference type="GO" id="GO:0043025">
    <property type="term" value="C:neuronal cell body"/>
    <property type="evidence" value="ECO:0000250"/>
    <property type="project" value="UniProtKB"/>
</dbReference>
<dbReference type="GO" id="GO:0005634">
    <property type="term" value="C:nucleus"/>
    <property type="evidence" value="ECO:0000250"/>
    <property type="project" value="UniProtKB"/>
</dbReference>
<dbReference type="GO" id="GO:0032991">
    <property type="term" value="C:protein-containing complex"/>
    <property type="evidence" value="ECO:0000250"/>
    <property type="project" value="UniProtKB"/>
</dbReference>
<dbReference type="GO" id="GO:0005507">
    <property type="term" value="F:copper ion binding"/>
    <property type="evidence" value="ECO:0000250"/>
    <property type="project" value="UniProtKB"/>
</dbReference>
<dbReference type="GO" id="GO:0030346">
    <property type="term" value="F:protein phosphatase 2B binding"/>
    <property type="evidence" value="ECO:0000250"/>
    <property type="project" value="UniProtKB"/>
</dbReference>
<dbReference type="GO" id="GO:0051087">
    <property type="term" value="F:protein-folding chaperone binding"/>
    <property type="evidence" value="ECO:0000250"/>
    <property type="project" value="UniProtKB"/>
</dbReference>
<dbReference type="GO" id="GO:0004784">
    <property type="term" value="F:superoxide dismutase activity"/>
    <property type="evidence" value="ECO:0000250"/>
    <property type="project" value="UniProtKB"/>
</dbReference>
<dbReference type="GO" id="GO:0008270">
    <property type="term" value="F:zinc ion binding"/>
    <property type="evidence" value="ECO:0000250"/>
    <property type="project" value="UniProtKB"/>
</dbReference>
<dbReference type="GO" id="GO:0060088">
    <property type="term" value="P:auditory receptor cell stereocilium organization"/>
    <property type="evidence" value="ECO:0000250"/>
    <property type="project" value="UniProtKB"/>
</dbReference>
<dbReference type="GO" id="GO:0007566">
    <property type="term" value="P:embryo implantation"/>
    <property type="evidence" value="ECO:0000250"/>
    <property type="project" value="UniProtKB"/>
</dbReference>
<dbReference type="GO" id="GO:0006749">
    <property type="term" value="P:glutathione metabolic process"/>
    <property type="evidence" value="ECO:0000250"/>
    <property type="project" value="UniProtKB"/>
</dbReference>
<dbReference type="GO" id="GO:0060047">
    <property type="term" value="P:heart contraction"/>
    <property type="evidence" value="ECO:0000250"/>
    <property type="project" value="UniProtKB"/>
</dbReference>
<dbReference type="GO" id="GO:0050665">
    <property type="term" value="P:hydrogen peroxide biosynthetic process"/>
    <property type="evidence" value="ECO:0000250"/>
    <property type="project" value="UniProtKB"/>
</dbReference>
<dbReference type="GO" id="GO:0006879">
    <property type="term" value="P:intracellular iron ion homeostasis"/>
    <property type="evidence" value="ECO:0000250"/>
    <property type="project" value="UniProtKB"/>
</dbReference>
<dbReference type="GO" id="GO:0007626">
    <property type="term" value="P:locomotory behavior"/>
    <property type="evidence" value="ECO:0000250"/>
    <property type="project" value="UniProtKB"/>
</dbReference>
<dbReference type="GO" id="GO:0046716">
    <property type="term" value="P:muscle cell cellular homeostasis"/>
    <property type="evidence" value="ECO:0000250"/>
    <property type="project" value="UniProtKB"/>
</dbReference>
<dbReference type="GO" id="GO:0002262">
    <property type="term" value="P:myeloid cell homeostasis"/>
    <property type="evidence" value="ECO:0000250"/>
    <property type="project" value="UniProtKB"/>
</dbReference>
<dbReference type="GO" id="GO:0043524">
    <property type="term" value="P:negative regulation of neuron apoptotic process"/>
    <property type="evidence" value="ECO:0000250"/>
    <property type="project" value="UniProtKB"/>
</dbReference>
<dbReference type="GO" id="GO:0060052">
    <property type="term" value="P:neurofilament cytoskeleton organization"/>
    <property type="evidence" value="ECO:0000250"/>
    <property type="project" value="UniProtKB"/>
</dbReference>
<dbReference type="GO" id="GO:0001541">
    <property type="term" value="P:ovarian follicle development"/>
    <property type="evidence" value="ECO:0000250"/>
    <property type="project" value="UniProtKB"/>
</dbReference>
<dbReference type="GO" id="GO:0032287">
    <property type="term" value="P:peripheral nervous system myelin maintenance"/>
    <property type="evidence" value="ECO:0000250"/>
    <property type="project" value="UniProtKB"/>
</dbReference>
<dbReference type="GO" id="GO:0001819">
    <property type="term" value="P:positive regulation of cytokine production"/>
    <property type="evidence" value="ECO:0000250"/>
    <property type="project" value="UniProtKB"/>
</dbReference>
<dbReference type="GO" id="GO:0043410">
    <property type="term" value="P:positive regulation of MAPK cascade"/>
    <property type="evidence" value="ECO:0000250"/>
    <property type="project" value="UniProtKB"/>
</dbReference>
<dbReference type="GO" id="GO:0072593">
    <property type="term" value="P:reactive oxygen species metabolic process"/>
    <property type="evidence" value="ECO:0000250"/>
    <property type="project" value="UniProtKB"/>
</dbReference>
<dbReference type="GO" id="GO:0008217">
    <property type="term" value="P:regulation of blood pressure"/>
    <property type="evidence" value="ECO:0000250"/>
    <property type="project" value="UniProtKB"/>
</dbReference>
<dbReference type="GO" id="GO:0051881">
    <property type="term" value="P:regulation of mitochondrial membrane potential"/>
    <property type="evidence" value="ECO:0000250"/>
    <property type="project" value="UniProtKB"/>
</dbReference>
<dbReference type="GO" id="GO:0040014">
    <property type="term" value="P:regulation of multicellular organism growth"/>
    <property type="evidence" value="ECO:0000250"/>
    <property type="project" value="UniProtKB"/>
</dbReference>
<dbReference type="GO" id="GO:0060087">
    <property type="term" value="P:relaxation of vascular associated smooth muscle"/>
    <property type="evidence" value="ECO:0000250"/>
    <property type="project" value="UniProtKB"/>
</dbReference>
<dbReference type="GO" id="GO:0019430">
    <property type="term" value="P:removal of superoxide radicals"/>
    <property type="evidence" value="ECO:0000250"/>
    <property type="project" value="UniProtKB"/>
</dbReference>
<dbReference type="GO" id="GO:0048678">
    <property type="term" value="P:response to axon injury"/>
    <property type="evidence" value="ECO:0000250"/>
    <property type="project" value="UniProtKB"/>
</dbReference>
<dbReference type="GO" id="GO:0045471">
    <property type="term" value="P:response to ethanol"/>
    <property type="evidence" value="ECO:0000250"/>
    <property type="project" value="UniProtKB"/>
</dbReference>
<dbReference type="GO" id="GO:0009408">
    <property type="term" value="P:response to heat"/>
    <property type="evidence" value="ECO:0000250"/>
    <property type="project" value="UniProtKB"/>
</dbReference>
<dbReference type="GO" id="GO:0042542">
    <property type="term" value="P:response to hydrogen peroxide"/>
    <property type="evidence" value="ECO:0000250"/>
    <property type="project" value="UniProtKB"/>
</dbReference>
<dbReference type="GO" id="GO:0000303">
    <property type="term" value="P:response to superoxide"/>
    <property type="evidence" value="ECO:0000250"/>
    <property type="project" value="UniProtKB"/>
</dbReference>
<dbReference type="GO" id="GO:0001895">
    <property type="term" value="P:retina homeostasis"/>
    <property type="evidence" value="ECO:0000250"/>
    <property type="project" value="UniProtKB"/>
</dbReference>
<dbReference type="GO" id="GO:0007605">
    <property type="term" value="P:sensory perception of sound"/>
    <property type="evidence" value="ECO:0000250"/>
    <property type="project" value="UniProtKB"/>
</dbReference>
<dbReference type="GO" id="GO:0007283">
    <property type="term" value="P:spermatogenesis"/>
    <property type="evidence" value="ECO:0000250"/>
    <property type="project" value="UniProtKB"/>
</dbReference>
<dbReference type="GO" id="GO:0006801">
    <property type="term" value="P:superoxide metabolic process"/>
    <property type="evidence" value="ECO:0000250"/>
    <property type="project" value="UniProtKB"/>
</dbReference>
<dbReference type="GO" id="GO:0019226">
    <property type="term" value="P:transmission of nerve impulse"/>
    <property type="evidence" value="ECO:0000250"/>
    <property type="project" value="UniProtKB"/>
</dbReference>
<dbReference type="CDD" id="cd00305">
    <property type="entry name" value="Cu-Zn_Superoxide_Dismutase"/>
    <property type="match status" value="1"/>
</dbReference>
<dbReference type="FunFam" id="2.60.40.200:FF:000001">
    <property type="entry name" value="Superoxide dismutase [Cu-Zn]"/>
    <property type="match status" value="1"/>
</dbReference>
<dbReference type="Gene3D" id="2.60.40.200">
    <property type="entry name" value="Superoxide dismutase, copper/zinc binding domain"/>
    <property type="match status" value="1"/>
</dbReference>
<dbReference type="InterPro" id="IPR036423">
    <property type="entry name" value="SOD-like_Cu/Zn_dom_sf"/>
</dbReference>
<dbReference type="InterPro" id="IPR024134">
    <property type="entry name" value="SOD_Cu/Zn_/chaperone"/>
</dbReference>
<dbReference type="InterPro" id="IPR018152">
    <property type="entry name" value="SOD_Cu/Zn_BS"/>
</dbReference>
<dbReference type="InterPro" id="IPR001424">
    <property type="entry name" value="SOD_Cu_Zn_dom"/>
</dbReference>
<dbReference type="PANTHER" id="PTHR10003">
    <property type="entry name" value="SUPEROXIDE DISMUTASE CU-ZN -RELATED"/>
    <property type="match status" value="1"/>
</dbReference>
<dbReference type="Pfam" id="PF00080">
    <property type="entry name" value="Sod_Cu"/>
    <property type="match status" value="1"/>
</dbReference>
<dbReference type="PRINTS" id="PR00068">
    <property type="entry name" value="CUZNDISMTASE"/>
</dbReference>
<dbReference type="SUPFAM" id="SSF49329">
    <property type="entry name" value="Cu,Zn superoxide dismutase-like"/>
    <property type="match status" value="1"/>
</dbReference>
<dbReference type="PROSITE" id="PS00087">
    <property type="entry name" value="SOD_CU_ZN_1"/>
    <property type="match status" value="1"/>
</dbReference>
<dbReference type="PROSITE" id="PS00332">
    <property type="entry name" value="SOD_CU_ZN_2"/>
    <property type="match status" value="1"/>
</dbReference>
<gene>
    <name evidence="2" type="primary">SOD1</name>
</gene>
<evidence type="ECO:0000250" key="1"/>
<evidence type="ECO:0000250" key="2">
    <source>
        <dbReference type="UniProtKB" id="P00441"/>
    </source>
</evidence>
<evidence type="ECO:0000250" key="3">
    <source>
        <dbReference type="UniProtKB" id="P00442"/>
    </source>
</evidence>
<evidence type="ECO:0000250" key="4">
    <source>
        <dbReference type="UniProtKB" id="P07632"/>
    </source>
</evidence>
<evidence type="ECO:0000250" key="5">
    <source>
        <dbReference type="UniProtKB" id="P08228"/>
    </source>
</evidence>
<evidence type="ECO:0000256" key="6">
    <source>
        <dbReference type="SAM" id="MobiDB-lite"/>
    </source>
</evidence>
<evidence type="ECO:0000305" key="7"/>
<name>SODC_CALJA</name>
<feature type="initiator methionine" description="Removed" evidence="3">
    <location>
        <position position="1"/>
    </location>
</feature>
<feature type="chain" id="PRO_0000164050" description="Superoxide dismutase [Cu-Zn]">
    <location>
        <begin position="2"/>
        <end position="154"/>
    </location>
</feature>
<feature type="region of interest" description="Disordered" evidence="6">
    <location>
        <begin position="62"/>
        <end position="81"/>
    </location>
</feature>
<feature type="binding site" evidence="1">
    <location>
        <position position="47"/>
    </location>
    <ligand>
        <name>Cu cation</name>
        <dbReference type="ChEBI" id="CHEBI:23378"/>
        <note>catalytic</note>
    </ligand>
</feature>
<feature type="binding site" evidence="1">
    <location>
        <position position="49"/>
    </location>
    <ligand>
        <name>Cu cation</name>
        <dbReference type="ChEBI" id="CHEBI:23378"/>
        <note>catalytic</note>
    </ligand>
</feature>
<feature type="binding site" evidence="1">
    <location>
        <position position="64"/>
    </location>
    <ligand>
        <name>Cu cation</name>
        <dbReference type="ChEBI" id="CHEBI:23378"/>
        <note>catalytic</note>
    </ligand>
</feature>
<feature type="binding site" evidence="1">
    <location>
        <position position="64"/>
    </location>
    <ligand>
        <name>Zn(2+)</name>
        <dbReference type="ChEBI" id="CHEBI:29105"/>
        <note>structural</note>
    </ligand>
</feature>
<feature type="binding site" evidence="1">
    <location>
        <position position="72"/>
    </location>
    <ligand>
        <name>Zn(2+)</name>
        <dbReference type="ChEBI" id="CHEBI:29105"/>
        <note>structural</note>
    </ligand>
</feature>
<feature type="binding site" evidence="1">
    <location>
        <position position="81"/>
    </location>
    <ligand>
        <name>Zn(2+)</name>
        <dbReference type="ChEBI" id="CHEBI:29105"/>
        <note>structural</note>
    </ligand>
</feature>
<feature type="binding site" evidence="1">
    <location>
        <position position="84"/>
    </location>
    <ligand>
        <name>Zn(2+)</name>
        <dbReference type="ChEBI" id="CHEBI:29105"/>
        <note>structural</note>
    </ligand>
</feature>
<feature type="binding site" evidence="1">
    <location>
        <position position="121"/>
    </location>
    <ligand>
        <name>Cu cation</name>
        <dbReference type="ChEBI" id="CHEBI:23378"/>
        <note>catalytic</note>
    </ligand>
</feature>
<feature type="modified residue" description="N-acetylalanine" evidence="3">
    <location>
        <position position="2"/>
    </location>
</feature>
<feature type="modified residue" description="N6-succinyllysine" evidence="5">
    <location>
        <position position="4"/>
    </location>
</feature>
<feature type="modified residue" description="N6-succinyllysine" evidence="5">
    <location>
        <position position="10"/>
    </location>
</feature>
<feature type="modified residue" description="N6-succinyllysine" evidence="5">
    <location>
        <position position="92"/>
    </location>
</feature>
<feature type="modified residue" description="Phosphoserine" evidence="2">
    <location>
        <position position="99"/>
    </location>
</feature>
<feature type="modified residue" description="Phosphoserine" evidence="2">
    <location>
        <position position="103"/>
    </location>
</feature>
<feature type="modified residue" description="Phosphoserine" evidence="4">
    <location>
        <position position="106"/>
    </location>
</feature>
<feature type="modified residue" description="Phosphoserine" evidence="5">
    <location>
        <position position="108"/>
    </location>
</feature>
<feature type="modified residue" description="N6-acetyllysine; alternate" evidence="2">
    <location>
        <position position="123"/>
    </location>
</feature>
<feature type="modified residue" description="N6-succinyllysine; alternate" evidence="2">
    <location>
        <position position="123"/>
    </location>
</feature>
<feature type="modified residue" description="N6-acetyllysine; alternate" evidence="5">
    <location>
        <position position="137"/>
    </location>
</feature>
<feature type="modified residue" description="N6-succinyllysine; alternate" evidence="5">
    <location>
        <position position="137"/>
    </location>
</feature>
<feature type="lipid moiety-binding region" description="S-palmitoyl cysteine" evidence="1">
    <location>
        <position position="7"/>
    </location>
</feature>
<feature type="disulfide bond" evidence="1">
    <location>
        <begin position="58"/>
        <end position="147"/>
    </location>
</feature>
<sequence>MAMKAVCVLKGDGPVQGTINFEQKESNGPVKVWGSITGLAEGLHGFHVHQFGDNTQGCTSAGPHFNPLSRKHGGPEDEERHVGDLGNVTAGKDGVAKVSIEDSVISLSGDHSIIGRTLVVHEKADDLGKGGNEESKKTGNAGGRLACGVIGIAQ</sequence>
<protein>
    <recommendedName>
        <fullName evidence="2">Superoxide dismutase [Cu-Zn]</fullName>
        <ecNumber evidence="2">1.15.1.1</ecNumber>
    </recommendedName>
</protein>
<comment type="function">
    <text>Destroys radicals which are normally produced within the cells and which are toxic to biological systems.</text>
</comment>
<comment type="catalytic activity">
    <reaction>
        <text>2 superoxide + 2 H(+) = H2O2 + O2</text>
        <dbReference type="Rhea" id="RHEA:20696"/>
        <dbReference type="ChEBI" id="CHEBI:15378"/>
        <dbReference type="ChEBI" id="CHEBI:15379"/>
        <dbReference type="ChEBI" id="CHEBI:16240"/>
        <dbReference type="ChEBI" id="CHEBI:18421"/>
        <dbReference type="EC" id="1.15.1.1"/>
    </reaction>
</comment>
<comment type="cofactor">
    <cofactor evidence="1">
        <name>Cu cation</name>
        <dbReference type="ChEBI" id="CHEBI:23378"/>
    </cofactor>
    <text evidence="1">Binds 1 copper ion per subunit.</text>
</comment>
<comment type="cofactor">
    <cofactor evidence="1">
        <name>Zn(2+)</name>
        <dbReference type="ChEBI" id="CHEBI:29105"/>
    </cofactor>
    <text evidence="1">Binds 1 zinc ion per subunit.</text>
</comment>
<comment type="subunit">
    <text evidence="2 5">Homodimer; non-disulfide-linked (By similarity). Heterodimer with SOD1. The heterodimer CCS:SOD1 interacts with SLC31A1; this heterotrimer is Cu(1+)-mediated and its maintenance is regulated through SOD1 activation (By similarity).</text>
</comment>
<comment type="subcellular location">
    <subcellularLocation>
        <location evidence="1">Cytoplasm</location>
    </subcellularLocation>
    <subcellularLocation>
        <location evidence="1">Nucleus</location>
    </subcellularLocation>
</comment>
<comment type="PTM">
    <text evidence="1">Palmitoylation helps nuclear targeting and decreases catalytic activity.</text>
</comment>
<comment type="PTM">
    <text evidence="2">Succinylation, adjacent to copper catalytic site, probably inhibits activity. Desuccinylation by SIRT5 enhances activity.</text>
</comment>
<comment type="similarity">
    <text evidence="7">Belongs to the Cu-Zn superoxide dismutase family.</text>
</comment>
<organism>
    <name type="scientific">Callithrix jacchus</name>
    <name type="common">White-tufted-ear marmoset</name>
    <dbReference type="NCBI Taxonomy" id="9483"/>
    <lineage>
        <taxon>Eukaryota</taxon>
        <taxon>Metazoa</taxon>
        <taxon>Chordata</taxon>
        <taxon>Craniata</taxon>
        <taxon>Vertebrata</taxon>
        <taxon>Euteleostomi</taxon>
        <taxon>Mammalia</taxon>
        <taxon>Eutheria</taxon>
        <taxon>Euarchontoglires</taxon>
        <taxon>Primates</taxon>
        <taxon>Haplorrhini</taxon>
        <taxon>Platyrrhini</taxon>
        <taxon>Cebidae</taxon>
        <taxon>Callitrichinae</taxon>
        <taxon>Callithrix</taxon>
        <taxon>Callithrix</taxon>
    </lineage>
</organism>